<reference key="1">
    <citation type="journal article" date="2016" name="Stand. Genomic Sci.">
        <title>Complete genome sequence of Methanospirillum hungatei type strain JF1.</title>
        <authorList>
            <person name="Gunsalus R.P."/>
            <person name="Cook L.E."/>
            <person name="Crable B."/>
            <person name="Rohlin L."/>
            <person name="McDonald E."/>
            <person name="Mouttaki H."/>
            <person name="Sieber J.R."/>
            <person name="Poweleit N."/>
            <person name="Zhou H."/>
            <person name="Lapidus A.L."/>
            <person name="Daligault H.E."/>
            <person name="Land M."/>
            <person name="Gilna P."/>
            <person name="Ivanova N."/>
            <person name="Kyrpides N."/>
            <person name="Culley D.E."/>
            <person name="McInerney M.J."/>
        </authorList>
    </citation>
    <scope>NUCLEOTIDE SEQUENCE [LARGE SCALE GENOMIC DNA]</scope>
    <source>
        <strain>ATCC 27890 / DSM 864 / NBRC 100397 / JF-1</strain>
    </source>
</reference>
<accession>Q2FP51</accession>
<evidence type="ECO:0000255" key="1">
    <source>
        <dbReference type="HAMAP-Rule" id="MF_00310"/>
    </source>
</evidence>
<dbReference type="EMBL" id="CP000254">
    <property type="protein sequence ID" value="ABD40932.1"/>
    <property type="molecule type" value="Genomic_DNA"/>
</dbReference>
<dbReference type="RefSeq" id="WP_011448209.1">
    <property type="nucleotide sequence ID" value="NC_007796.1"/>
</dbReference>
<dbReference type="SMR" id="Q2FP51"/>
<dbReference type="FunCoup" id="Q2FP51">
    <property type="interactions" value="44"/>
</dbReference>
<dbReference type="STRING" id="323259.Mhun_1184"/>
<dbReference type="EnsemblBacteria" id="ABD40932">
    <property type="protein sequence ID" value="ABD40932"/>
    <property type="gene ID" value="Mhun_1184"/>
</dbReference>
<dbReference type="GeneID" id="3923386"/>
<dbReference type="KEGG" id="mhu:Mhun_1184"/>
<dbReference type="eggNOG" id="arCOG00865">
    <property type="taxonomic scope" value="Archaea"/>
</dbReference>
<dbReference type="HOGENOM" id="CLU_022916_0_0_2"/>
<dbReference type="InParanoid" id="Q2FP51"/>
<dbReference type="OrthoDB" id="32941at2157"/>
<dbReference type="Proteomes" id="UP000001941">
    <property type="component" value="Chromosome"/>
</dbReference>
<dbReference type="GO" id="GO:0005886">
    <property type="term" value="C:plasma membrane"/>
    <property type="evidence" value="ECO:0007669"/>
    <property type="project" value="UniProtKB-SubCell"/>
</dbReference>
<dbReference type="GO" id="GO:0005524">
    <property type="term" value="F:ATP binding"/>
    <property type="evidence" value="ECO:0007669"/>
    <property type="project" value="UniProtKB-UniRule"/>
</dbReference>
<dbReference type="GO" id="GO:0046933">
    <property type="term" value="F:proton-transporting ATP synthase activity, rotational mechanism"/>
    <property type="evidence" value="ECO:0007669"/>
    <property type="project" value="UniProtKB-UniRule"/>
</dbReference>
<dbReference type="GO" id="GO:0042777">
    <property type="term" value="P:proton motive force-driven plasma membrane ATP synthesis"/>
    <property type="evidence" value="ECO:0007669"/>
    <property type="project" value="UniProtKB-UniRule"/>
</dbReference>
<dbReference type="CDD" id="cd18112">
    <property type="entry name" value="ATP-synt_V_A-type_beta_C"/>
    <property type="match status" value="1"/>
</dbReference>
<dbReference type="CDD" id="cd18118">
    <property type="entry name" value="ATP-synt_V_A-type_beta_N"/>
    <property type="match status" value="1"/>
</dbReference>
<dbReference type="CDD" id="cd01135">
    <property type="entry name" value="V_A-ATPase_B"/>
    <property type="match status" value="1"/>
</dbReference>
<dbReference type="Gene3D" id="3.40.50.12240">
    <property type="match status" value="1"/>
</dbReference>
<dbReference type="HAMAP" id="MF_00310">
    <property type="entry name" value="ATP_synth_B_arch"/>
    <property type="match status" value="1"/>
</dbReference>
<dbReference type="InterPro" id="IPR055190">
    <property type="entry name" value="ATP-synt_VA_C"/>
</dbReference>
<dbReference type="InterPro" id="IPR020003">
    <property type="entry name" value="ATPase_a/bsu_AS"/>
</dbReference>
<dbReference type="InterPro" id="IPR004100">
    <property type="entry name" value="ATPase_F1/V1/A1_a/bsu_N"/>
</dbReference>
<dbReference type="InterPro" id="IPR036121">
    <property type="entry name" value="ATPase_F1/V1/A1_a/bsu_N_sf"/>
</dbReference>
<dbReference type="InterPro" id="IPR000194">
    <property type="entry name" value="ATPase_F1/V1/A1_a/bsu_nucl-bd"/>
</dbReference>
<dbReference type="InterPro" id="IPR027417">
    <property type="entry name" value="P-loop_NTPase"/>
</dbReference>
<dbReference type="InterPro" id="IPR022879">
    <property type="entry name" value="V-ATPase_su_B/beta"/>
</dbReference>
<dbReference type="NCBIfam" id="NF003235">
    <property type="entry name" value="PRK04196.1"/>
    <property type="match status" value="1"/>
</dbReference>
<dbReference type="PANTHER" id="PTHR43389">
    <property type="entry name" value="V-TYPE PROTON ATPASE SUBUNIT B"/>
    <property type="match status" value="1"/>
</dbReference>
<dbReference type="PANTHER" id="PTHR43389:SF4">
    <property type="entry name" value="V-TYPE PROTON ATPASE SUBUNIT B"/>
    <property type="match status" value="1"/>
</dbReference>
<dbReference type="Pfam" id="PF00006">
    <property type="entry name" value="ATP-synt_ab"/>
    <property type="match status" value="1"/>
</dbReference>
<dbReference type="Pfam" id="PF02874">
    <property type="entry name" value="ATP-synt_ab_N"/>
    <property type="match status" value="1"/>
</dbReference>
<dbReference type="Pfam" id="PF22919">
    <property type="entry name" value="ATP-synt_VA_C"/>
    <property type="match status" value="1"/>
</dbReference>
<dbReference type="PIRSF" id="PIRSF039114">
    <property type="entry name" value="V-ATPsynth_beta/V-ATPase_B"/>
    <property type="match status" value="1"/>
</dbReference>
<dbReference type="SUPFAM" id="SSF47917">
    <property type="entry name" value="C-terminal domain of alpha and beta subunits of F1 ATP synthase"/>
    <property type="match status" value="1"/>
</dbReference>
<dbReference type="SUPFAM" id="SSF50615">
    <property type="entry name" value="N-terminal domain of alpha and beta subunits of F1 ATP synthase"/>
    <property type="match status" value="1"/>
</dbReference>
<dbReference type="SUPFAM" id="SSF52540">
    <property type="entry name" value="P-loop containing nucleoside triphosphate hydrolases"/>
    <property type="match status" value="1"/>
</dbReference>
<dbReference type="PROSITE" id="PS00152">
    <property type="entry name" value="ATPASE_ALPHA_BETA"/>
    <property type="match status" value="1"/>
</dbReference>
<keyword id="KW-0066">ATP synthesis</keyword>
<keyword id="KW-1003">Cell membrane</keyword>
<keyword id="KW-0375">Hydrogen ion transport</keyword>
<keyword id="KW-0406">Ion transport</keyword>
<keyword id="KW-0472">Membrane</keyword>
<keyword id="KW-1185">Reference proteome</keyword>
<keyword id="KW-0813">Transport</keyword>
<name>AATB1_METHJ</name>
<comment type="function">
    <text evidence="1">Component of the A-type ATP synthase that produces ATP from ADP in the presence of a proton gradient across the membrane. The B chain is a regulatory subunit.</text>
</comment>
<comment type="subunit">
    <text evidence="1">Has multiple subunits with at least A(3), B(3), C, D, E, F, H, I and proteolipid K(x).</text>
</comment>
<comment type="subcellular location">
    <subcellularLocation>
        <location evidence="1">Cell membrane</location>
        <topology evidence="1">Peripheral membrane protein</topology>
    </subcellularLocation>
</comment>
<comment type="similarity">
    <text evidence="1">Belongs to the ATPase alpha/beta chains family.</text>
</comment>
<feature type="chain" id="PRO_0000322503" description="A-type ATP synthase subunit B 1">
    <location>
        <begin position="1"/>
        <end position="460"/>
    </location>
</feature>
<gene>
    <name evidence="1" type="primary">atpB1</name>
    <name type="ordered locus">Mhun_1184</name>
</gene>
<sequence length="460" mass="51049">MKEYRTITQVAGPLVFVEKTEPVGYQELVNLVLADGSEKRGQVLDTSDDIVVVQVFETTTGIGKDTGVRFTGETIKMPVGKDMLGRILSGAGKPKDGGPDIVPEKRLEITGAAINPWARGSPRQFIQTGISTIDLTNTLVRGQKLPIFSGSGLPHNEIALQIARQAKVPGSDEQFAVVFAAMGITKEEENQFMAEFERTGALEHAVVFLNLADDPAVERIITPRLALTTAEYLAFELDYHVLVILTDMTNYCEALRQIGAAREEVPGRRGYPGYMYTDLASLYERAGIIKGKKGSVTQLSILTMPGDDITHPIPDLSGYITEGQIVVNRDLHRKGIYPPINVLPSLSRLMNLGIGKGFTREDHKKVSDQLYAGYAEGVDLRGLVAIVGKDALSERDRGFLEFAEMFENRFVRQGKDEDRTIDESLDLGWDLLKDIPEEQLVRIDRELIQKYHPKYRKKAE</sequence>
<protein>
    <recommendedName>
        <fullName evidence="1">A-type ATP synthase subunit B 1</fullName>
    </recommendedName>
</protein>
<organism>
    <name type="scientific">Methanospirillum hungatei JF-1 (strain ATCC 27890 / DSM 864 / NBRC 100397 / JF-1)</name>
    <dbReference type="NCBI Taxonomy" id="323259"/>
    <lineage>
        <taxon>Archaea</taxon>
        <taxon>Methanobacteriati</taxon>
        <taxon>Methanobacteriota</taxon>
        <taxon>Stenosarchaea group</taxon>
        <taxon>Methanomicrobia</taxon>
        <taxon>Methanomicrobiales</taxon>
        <taxon>Methanospirillaceae</taxon>
        <taxon>Methanospirillum</taxon>
    </lineage>
</organism>
<proteinExistence type="inferred from homology"/>